<proteinExistence type="evidence at transcript level"/>
<comment type="function">
    <text evidence="1">Involved in acetylcholine transport into synaptic vesicles.</text>
</comment>
<comment type="subcellular location">
    <subcellularLocation>
        <location evidence="2">Membrane</location>
        <topology evidence="2">Multi-pass membrane protein</topology>
    </subcellularLocation>
</comment>
<comment type="similarity">
    <text evidence="2">Belongs to the major facilitator superfamily. Vesicular transporter family.</text>
</comment>
<keyword id="KW-0325">Glycoprotein</keyword>
<keyword id="KW-0472">Membrane</keyword>
<keyword id="KW-0532">Neurotransmitter transport</keyword>
<keyword id="KW-1185">Reference proteome</keyword>
<keyword id="KW-0812">Transmembrane</keyword>
<keyword id="KW-1133">Transmembrane helix</keyword>
<keyword id="KW-0813">Transport</keyword>
<organism>
    <name type="scientific">Danio rerio</name>
    <name type="common">Zebrafish</name>
    <name type="synonym">Brachydanio rerio</name>
    <dbReference type="NCBI Taxonomy" id="7955"/>
    <lineage>
        <taxon>Eukaryota</taxon>
        <taxon>Metazoa</taxon>
        <taxon>Chordata</taxon>
        <taxon>Craniata</taxon>
        <taxon>Vertebrata</taxon>
        <taxon>Euteleostomi</taxon>
        <taxon>Actinopterygii</taxon>
        <taxon>Neopterygii</taxon>
        <taxon>Teleostei</taxon>
        <taxon>Ostariophysi</taxon>
        <taxon>Cypriniformes</taxon>
        <taxon>Danionidae</taxon>
        <taxon>Danioninae</taxon>
        <taxon>Danio</taxon>
    </lineage>
</organism>
<evidence type="ECO:0000250" key="1">
    <source>
        <dbReference type="UniProtKB" id="Q16572"/>
    </source>
</evidence>
<evidence type="ECO:0000255" key="2"/>
<evidence type="ECO:0000256" key="3">
    <source>
        <dbReference type="SAM" id="MobiDB-lite"/>
    </source>
</evidence>
<evidence type="ECO:0000312" key="4">
    <source>
        <dbReference type="EMBL" id="AAI24355.1"/>
    </source>
</evidence>
<evidence type="ECO:0000312" key="5">
    <source>
        <dbReference type="EMBL" id="CAX14609.1"/>
    </source>
</evidence>
<evidence type="ECO:0000312" key="6">
    <source>
        <dbReference type="ZFIN" id="ZDB-GENE-060929-990"/>
    </source>
</evidence>
<sequence>MATEESGGLAQTAAVKLSEMGERTKQLGNAIQDPERQRRIILVIVCVALLLDNMLYMVIVPIVPDYLAHLESESEQAHVKGNSSINITQNENFDLQIGVLFASKAILQLLVNPLTGTFIDRVGYDIPLLIGLSIMFVSTCIFAFAENYATLFMARSLQGLGSAFADTSGIAMIADKYAEESERSRALGIALAFISFGSLAAPPFGGVLYEFAGKRFPFIALACVCLADGILCLTVLKPFSSRTRENMPVGTPIYKLMIDPYIAVVAGALTTCNIPLAFLEPTIANWMEETMNASQWQIGITWLPAFFPHILGVYLTVKLAAKYPHLQWFYGALGMVIIGASSCIVPACKNFEQLIIPLCGVCFGIALVDTALLPTLAFLVDVRHVSVYGSVYAIADISYCVAYALGPIVAGKIVHDLGFVQLNLGMGLANVLYAPALLLLRNVSLMKPSHSERNMLLEEGATGLYDTIRMEERQRKKHGYSSSGNCVPIDENGTFAGQSKSFSEEETSEPEYI</sequence>
<protein>
    <recommendedName>
        <fullName>Probable vesicular acetylcholine transporter-A</fullName>
        <shortName evidence="1">VAChT-A</shortName>
    </recommendedName>
    <alternativeName>
        <fullName evidence="6">Solute carrier family 18 member 3-A</fullName>
    </alternativeName>
</protein>
<gene>
    <name evidence="6" type="primary">slc18a3a</name>
    <name type="ORF">si:ch211-232k3.4</name>
    <name type="ORF">zgc:153442</name>
</gene>
<feature type="chain" id="PRO_0000401127" description="Probable vesicular acetylcholine transporter-A">
    <location>
        <begin position="1"/>
        <end position="513"/>
    </location>
</feature>
<feature type="topological domain" description="Cytoplasmic" evidence="2">
    <location>
        <begin position="1"/>
        <end position="39"/>
    </location>
</feature>
<feature type="transmembrane region" description="Helical" evidence="2">
    <location>
        <begin position="40"/>
        <end position="60"/>
    </location>
</feature>
<feature type="topological domain" description="Lumenal, vesicle" evidence="2">
    <location>
        <begin position="61"/>
        <end position="98"/>
    </location>
</feature>
<feature type="transmembrane region" description="Helical" evidence="2">
    <location>
        <begin position="99"/>
        <end position="119"/>
    </location>
</feature>
<feature type="topological domain" description="Cytoplasmic" evidence="2">
    <location>
        <begin position="120"/>
        <end position="125"/>
    </location>
</feature>
<feature type="transmembrane region" description="Helical" evidence="2">
    <location>
        <begin position="126"/>
        <end position="146"/>
    </location>
</feature>
<feature type="topological domain" description="Lumenal, vesicle" evidence="2">
    <location>
        <begin position="147"/>
        <end position="156"/>
    </location>
</feature>
<feature type="transmembrane region" description="Helical" evidence="2">
    <location>
        <begin position="157"/>
        <end position="174"/>
    </location>
</feature>
<feature type="topological domain" description="Cytoplasmic" evidence="2">
    <location>
        <begin position="175"/>
        <end position="186"/>
    </location>
</feature>
<feature type="transmembrane region" description="Helical" evidence="2">
    <location>
        <begin position="187"/>
        <end position="207"/>
    </location>
</feature>
<feature type="topological domain" description="Lumenal, vesicle" evidence="2">
    <location>
        <begin position="208"/>
        <end position="215"/>
    </location>
</feature>
<feature type="transmembrane region" description="Helical" evidence="2">
    <location>
        <begin position="216"/>
        <end position="236"/>
    </location>
</feature>
<feature type="topological domain" description="Cytoplasmic" evidence="2">
    <location>
        <begin position="237"/>
        <end position="257"/>
    </location>
</feature>
<feature type="transmembrane region" description="Helical" evidence="2">
    <location>
        <begin position="258"/>
        <end position="278"/>
    </location>
</feature>
<feature type="topological domain" description="Lumenal, vesicle" evidence="2">
    <location>
        <begin position="279"/>
        <end position="296"/>
    </location>
</feature>
<feature type="transmembrane region" description="Helical" evidence="2">
    <location>
        <begin position="297"/>
        <end position="317"/>
    </location>
</feature>
<feature type="topological domain" description="Cytoplasmic" evidence="2">
    <location>
        <begin position="318"/>
        <end position="327"/>
    </location>
</feature>
<feature type="transmembrane region" description="Helical" evidence="2">
    <location>
        <begin position="328"/>
        <end position="348"/>
    </location>
</feature>
<feature type="topological domain" description="Lumenal, vesicle" evidence="2">
    <location>
        <begin position="349"/>
        <end position="353"/>
    </location>
</feature>
<feature type="transmembrane region" description="Helical" evidence="2">
    <location>
        <begin position="354"/>
        <end position="374"/>
    </location>
</feature>
<feature type="topological domain" description="Cytoplasmic" evidence="2">
    <location>
        <begin position="375"/>
        <end position="390"/>
    </location>
</feature>
<feature type="transmembrane region" description="Helical" evidence="2">
    <location>
        <begin position="391"/>
        <end position="411"/>
    </location>
</feature>
<feature type="topological domain" description="Lumenal, vesicle" evidence="2">
    <location>
        <begin position="412"/>
        <end position="418"/>
    </location>
</feature>
<feature type="transmembrane region" description="Helical" evidence="2">
    <location>
        <begin position="419"/>
        <end position="439"/>
    </location>
</feature>
<feature type="topological domain" description="Cytoplasmic" evidence="2">
    <location>
        <begin position="440"/>
        <end position="513"/>
    </location>
</feature>
<feature type="region of interest" description="Disordered" evidence="3">
    <location>
        <begin position="475"/>
        <end position="513"/>
    </location>
</feature>
<feature type="compositionally biased region" description="Acidic residues" evidence="3">
    <location>
        <begin position="504"/>
        <end position="513"/>
    </location>
</feature>
<feature type="glycosylation site" description="N-linked (GlcNAc...) asparagine" evidence="2">
    <location>
        <position position="82"/>
    </location>
</feature>
<feature type="glycosylation site" description="N-linked (GlcNAc...) asparagine" evidence="2">
    <location>
        <position position="86"/>
    </location>
</feature>
<feature type="glycosylation site" description="N-linked (GlcNAc...) asparagine" evidence="2">
    <location>
        <position position="292"/>
    </location>
</feature>
<name>VACHA_DANRE</name>
<reference key="1">
    <citation type="journal article" date="2013" name="Nature">
        <title>The zebrafish reference genome sequence and its relationship to the human genome.</title>
        <authorList>
            <person name="Howe K."/>
            <person name="Clark M.D."/>
            <person name="Torroja C.F."/>
            <person name="Torrance J."/>
            <person name="Berthelot C."/>
            <person name="Muffato M."/>
            <person name="Collins J.E."/>
            <person name="Humphray S."/>
            <person name="McLaren K."/>
            <person name="Matthews L."/>
            <person name="McLaren S."/>
            <person name="Sealy I."/>
            <person name="Caccamo M."/>
            <person name="Churcher C."/>
            <person name="Scott C."/>
            <person name="Barrett J.C."/>
            <person name="Koch R."/>
            <person name="Rauch G.J."/>
            <person name="White S."/>
            <person name="Chow W."/>
            <person name="Kilian B."/>
            <person name="Quintais L.T."/>
            <person name="Guerra-Assuncao J.A."/>
            <person name="Zhou Y."/>
            <person name="Gu Y."/>
            <person name="Yen J."/>
            <person name="Vogel J.H."/>
            <person name="Eyre T."/>
            <person name="Redmond S."/>
            <person name="Banerjee R."/>
            <person name="Chi J."/>
            <person name="Fu B."/>
            <person name="Langley E."/>
            <person name="Maguire S.F."/>
            <person name="Laird G.K."/>
            <person name="Lloyd D."/>
            <person name="Kenyon E."/>
            <person name="Donaldson S."/>
            <person name="Sehra H."/>
            <person name="Almeida-King J."/>
            <person name="Loveland J."/>
            <person name="Trevanion S."/>
            <person name="Jones M."/>
            <person name="Quail M."/>
            <person name="Willey D."/>
            <person name="Hunt A."/>
            <person name="Burton J."/>
            <person name="Sims S."/>
            <person name="McLay K."/>
            <person name="Plumb B."/>
            <person name="Davis J."/>
            <person name="Clee C."/>
            <person name="Oliver K."/>
            <person name="Clark R."/>
            <person name="Riddle C."/>
            <person name="Elliot D."/>
            <person name="Threadgold G."/>
            <person name="Harden G."/>
            <person name="Ware D."/>
            <person name="Begum S."/>
            <person name="Mortimore B."/>
            <person name="Kerry G."/>
            <person name="Heath P."/>
            <person name="Phillimore B."/>
            <person name="Tracey A."/>
            <person name="Corby N."/>
            <person name="Dunn M."/>
            <person name="Johnson C."/>
            <person name="Wood J."/>
            <person name="Clark S."/>
            <person name="Pelan S."/>
            <person name="Griffiths G."/>
            <person name="Smith M."/>
            <person name="Glithero R."/>
            <person name="Howden P."/>
            <person name="Barker N."/>
            <person name="Lloyd C."/>
            <person name="Stevens C."/>
            <person name="Harley J."/>
            <person name="Holt K."/>
            <person name="Panagiotidis G."/>
            <person name="Lovell J."/>
            <person name="Beasley H."/>
            <person name="Henderson C."/>
            <person name="Gordon D."/>
            <person name="Auger K."/>
            <person name="Wright D."/>
            <person name="Collins J."/>
            <person name="Raisen C."/>
            <person name="Dyer L."/>
            <person name="Leung K."/>
            <person name="Robertson L."/>
            <person name="Ambridge K."/>
            <person name="Leongamornlert D."/>
            <person name="McGuire S."/>
            <person name="Gilderthorp R."/>
            <person name="Griffiths C."/>
            <person name="Manthravadi D."/>
            <person name="Nichol S."/>
            <person name="Barker G."/>
            <person name="Whitehead S."/>
            <person name="Kay M."/>
            <person name="Brown J."/>
            <person name="Murnane C."/>
            <person name="Gray E."/>
            <person name="Humphries M."/>
            <person name="Sycamore N."/>
            <person name="Barker D."/>
            <person name="Saunders D."/>
            <person name="Wallis J."/>
            <person name="Babbage A."/>
            <person name="Hammond S."/>
            <person name="Mashreghi-Mohammadi M."/>
            <person name="Barr L."/>
            <person name="Martin S."/>
            <person name="Wray P."/>
            <person name="Ellington A."/>
            <person name="Matthews N."/>
            <person name="Ellwood M."/>
            <person name="Woodmansey R."/>
            <person name="Clark G."/>
            <person name="Cooper J."/>
            <person name="Tromans A."/>
            <person name="Grafham D."/>
            <person name="Skuce C."/>
            <person name="Pandian R."/>
            <person name="Andrews R."/>
            <person name="Harrison E."/>
            <person name="Kimberley A."/>
            <person name="Garnett J."/>
            <person name="Fosker N."/>
            <person name="Hall R."/>
            <person name="Garner P."/>
            <person name="Kelly D."/>
            <person name="Bird C."/>
            <person name="Palmer S."/>
            <person name="Gehring I."/>
            <person name="Berger A."/>
            <person name="Dooley C.M."/>
            <person name="Ersan-Urun Z."/>
            <person name="Eser C."/>
            <person name="Geiger H."/>
            <person name="Geisler M."/>
            <person name="Karotki L."/>
            <person name="Kirn A."/>
            <person name="Konantz J."/>
            <person name="Konantz M."/>
            <person name="Oberlander M."/>
            <person name="Rudolph-Geiger S."/>
            <person name="Teucke M."/>
            <person name="Lanz C."/>
            <person name="Raddatz G."/>
            <person name="Osoegawa K."/>
            <person name="Zhu B."/>
            <person name="Rapp A."/>
            <person name="Widaa S."/>
            <person name="Langford C."/>
            <person name="Yang F."/>
            <person name="Schuster S.C."/>
            <person name="Carter N.P."/>
            <person name="Harrow J."/>
            <person name="Ning Z."/>
            <person name="Herrero J."/>
            <person name="Searle S.M."/>
            <person name="Enright A."/>
            <person name="Geisler R."/>
            <person name="Plasterk R.H."/>
            <person name="Lee C."/>
            <person name="Westerfield M."/>
            <person name="de Jong P.J."/>
            <person name="Zon L.I."/>
            <person name="Postlethwait J.H."/>
            <person name="Nusslein-Volhard C."/>
            <person name="Hubbard T.J."/>
            <person name="Roest Crollius H."/>
            <person name="Rogers J."/>
            <person name="Stemple D.L."/>
        </authorList>
    </citation>
    <scope>NUCLEOTIDE SEQUENCE [LARGE SCALE GENOMIC DNA]</scope>
    <source>
        <strain>Tuebingen</strain>
    </source>
</reference>
<reference evidence="5" key="2">
    <citation type="submission" date="2006-09" db="EMBL/GenBank/DDBJ databases">
        <authorList>
            <consortium name="NIH - Zebrafish Gene Collection (ZGC) project"/>
        </authorList>
    </citation>
    <scope>NUCLEOTIDE SEQUENCE [LARGE SCALE MRNA]</scope>
    <source>
        <tissue evidence="4">Eye</tissue>
    </source>
</reference>
<accession>Q08C75</accession>
<dbReference type="EMBL" id="BX855592">
    <property type="protein sequence ID" value="CAX14609.1"/>
    <property type="molecule type" value="Genomic_DNA"/>
</dbReference>
<dbReference type="EMBL" id="BC124354">
    <property type="protein sequence ID" value="AAI24355.1"/>
    <property type="molecule type" value="mRNA"/>
</dbReference>
<dbReference type="RefSeq" id="NP_001071018.1">
    <property type="nucleotide sequence ID" value="NM_001077550.1"/>
</dbReference>
<dbReference type="SMR" id="Q08C75"/>
<dbReference type="FunCoup" id="Q08C75">
    <property type="interactions" value="23"/>
</dbReference>
<dbReference type="STRING" id="7955.ENSDARP00000012428"/>
<dbReference type="GlyCosmos" id="Q08C75">
    <property type="glycosylation" value="3 sites, No reported glycans"/>
</dbReference>
<dbReference type="PaxDb" id="7955-ENSDARP00000012428"/>
<dbReference type="Ensembl" id="ENSDART00000026765">
    <property type="protein sequence ID" value="ENSDARP00000012428"/>
    <property type="gene ID" value="ENSDARG00000006356"/>
</dbReference>
<dbReference type="GeneID" id="559347"/>
<dbReference type="KEGG" id="dre:559347"/>
<dbReference type="AGR" id="ZFIN:ZDB-GENE-060929-990"/>
<dbReference type="CTD" id="559347"/>
<dbReference type="ZFIN" id="ZDB-GENE-060929-990">
    <property type="gene designation" value="slc18a3a"/>
</dbReference>
<dbReference type="eggNOG" id="KOG3764">
    <property type="taxonomic scope" value="Eukaryota"/>
</dbReference>
<dbReference type="HOGENOM" id="CLU_001265_10_9_1"/>
<dbReference type="InParanoid" id="Q08C75"/>
<dbReference type="OMA" id="REYWVSV"/>
<dbReference type="OrthoDB" id="5086884at2759"/>
<dbReference type="PhylomeDB" id="Q08C75"/>
<dbReference type="TreeFam" id="TF313494"/>
<dbReference type="Reactome" id="R-DRE-264642">
    <property type="pathway name" value="Acetylcholine Neurotransmitter Release Cycle"/>
</dbReference>
<dbReference type="PRO" id="PR:Q08C75"/>
<dbReference type="Proteomes" id="UP000000437">
    <property type="component" value="Chromosome 13"/>
</dbReference>
<dbReference type="Bgee" id="ENSDARG00000006356">
    <property type="expression patterns" value="Expressed in larva and 6 other cell types or tissues"/>
</dbReference>
<dbReference type="ExpressionAtlas" id="Q08C75">
    <property type="expression patterns" value="baseline and differential"/>
</dbReference>
<dbReference type="GO" id="GO:0030121">
    <property type="term" value="C:AP-1 adaptor complex"/>
    <property type="evidence" value="ECO:0000318"/>
    <property type="project" value="GO_Central"/>
</dbReference>
<dbReference type="GO" id="GO:0030122">
    <property type="term" value="C:AP-2 adaptor complex"/>
    <property type="evidence" value="ECO:0000318"/>
    <property type="project" value="GO_Central"/>
</dbReference>
<dbReference type="GO" id="GO:0043195">
    <property type="term" value="C:terminal bouton"/>
    <property type="evidence" value="ECO:0000318"/>
    <property type="project" value="GO_Central"/>
</dbReference>
<dbReference type="GO" id="GO:0005277">
    <property type="term" value="F:acetylcholine transmembrane transporter activity"/>
    <property type="evidence" value="ECO:0000318"/>
    <property type="project" value="GO_Central"/>
</dbReference>
<dbReference type="GO" id="GO:0042910">
    <property type="term" value="F:xenobiotic transmembrane transporter activity"/>
    <property type="evidence" value="ECO:0007669"/>
    <property type="project" value="InterPro"/>
</dbReference>
<dbReference type="GO" id="GO:0007268">
    <property type="term" value="P:chemical synaptic transmission"/>
    <property type="evidence" value="ECO:0000318"/>
    <property type="project" value="GO_Central"/>
</dbReference>
<dbReference type="GO" id="GO:0051649">
    <property type="term" value="P:establishment of localization in cell"/>
    <property type="evidence" value="ECO:0007669"/>
    <property type="project" value="UniProtKB-ARBA"/>
</dbReference>
<dbReference type="GO" id="GO:0006837">
    <property type="term" value="P:serotonin transport"/>
    <property type="evidence" value="ECO:0007669"/>
    <property type="project" value="UniProtKB-ARBA"/>
</dbReference>
<dbReference type="CDD" id="cd17383">
    <property type="entry name" value="MFS_SLC18A3_VAChT"/>
    <property type="match status" value="1"/>
</dbReference>
<dbReference type="FunFam" id="1.20.1250.20:FF:000109">
    <property type="entry name" value="Putative vesicular acetylcholine transporter"/>
    <property type="match status" value="1"/>
</dbReference>
<dbReference type="Gene3D" id="1.20.1250.20">
    <property type="entry name" value="MFS general substrate transporter like domains"/>
    <property type="match status" value="1"/>
</dbReference>
<dbReference type="InterPro" id="IPR011701">
    <property type="entry name" value="MFS"/>
</dbReference>
<dbReference type="InterPro" id="IPR020846">
    <property type="entry name" value="MFS_dom"/>
</dbReference>
<dbReference type="InterPro" id="IPR036259">
    <property type="entry name" value="MFS_trans_sf"/>
</dbReference>
<dbReference type="InterPro" id="IPR050930">
    <property type="entry name" value="MFS_Vesicular_Transporter"/>
</dbReference>
<dbReference type="InterPro" id="IPR004734">
    <property type="entry name" value="Multidrug-R"/>
</dbReference>
<dbReference type="NCBIfam" id="TIGR00880">
    <property type="entry name" value="2_A_01_02"/>
    <property type="match status" value="1"/>
</dbReference>
<dbReference type="PANTHER" id="PTHR23506">
    <property type="entry name" value="GH10249P"/>
    <property type="match status" value="1"/>
</dbReference>
<dbReference type="PANTHER" id="PTHR23506:SF13">
    <property type="entry name" value="VESICULAR ACETYLCHOLINE TRANSPORTER"/>
    <property type="match status" value="1"/>
</dbReference>
<dbReference type="Pfam" id="PF07690">
    <property type="entry name" value="MFS_1"/>
    <property type="match status" value="1"/>
</dbReference>
<dbReference type="SUPFAM" id="SSF103473">
    <property type="entry name" value="MFS general substrate transporter"/>
    <property type="match status" value="1"/>
</dbReference>
<dbReference type="PROSITE" id="PS50850">
    <property type="entry name" value="MFS"/>
    <property type="match status" value="1"/>
</dbReference>